<name>SYH_CUPPJ</name>
<reference key="1">
    <citation type="journal article" date="2010" name="PLoS ONE">
        <title>The complete multipartite genome sequence of Cupriavidus necator JMP134, a versatile pollutant degrader.</title>
        <authorList>
            <person name="Lykidis A."/>
            <person name="Perez-Pantoja D."/>
            <person name="Ledger T."/>
            <person name="Mavromatis K."/>
            <person name="Anderson I.J."/>
            <person name="Ivanova N.N."/>
            <person name="Hooper S.D."/>
            <person name="Lapidus A."/>
            <person name="Lucas S."/>
            <person name="Gonzalez B."/>
            <person name="Kyrpides N.C."/>
        </authorList>
    </citation>
    <scope>NUCLEOTIDE SEQUENCE [LARGE SCALE GENOMIC DNA]</scope>
    <source>
        <strain>JMP134 / LMG 1197</strain>
    </source>
</reference>
<dbReference type="EC" id="6.1.1.21" evidence="1"/>
<dbReference type="EMBL" id="CP000090">
    <property type="protein sequence ID" value="AAZ61449.1"/>
    <property type="molecule type" value="Genomic_DNA"/>
</dbReference>
<dbReference type="SMR" id="Q46ZI4"/>
<dbReference type="STRING" id="264198.Reut_A2085"/>
<dbReference type="KEGG" id="reu:Reut_A2085"/>
<dbReference type="eggNOG" id="COG0124">
    <property type="taxonomic scope" value="Bacteria"/>
</dbReference>
<dbReference type="HOGENOM" id="CLU_025113_1_1_4"/>
<dbReference type="OrthoDB" id="9800814at2"/>
<dbReference type="GO" id="GO:0005737">
    <property type="term" value="C:cytoplasm"/>
    <property type="evidence" value="ECO:0007669"/>
    <property type="project" value="UniProtKB-SubCell"/>
</dbReference>
<dbReference type="GO" id="GO:0005524">
    <property type="term" value="F:ATP binding"/>
    <property type="evidence" value="ECO:0007669"/>
    <property type="project" value="UniProtKB-UniRule"/>
</dbReference>
<dbReference type="GO" id="GO:0004821">
    <property type="term" value="F:histidine-tRNA ligase activity"/>
    <property type="evidence" value="ECO:0007669"/>
    <property type="project" value="UniProtKB-UniRule"/>
</dbReference>
<dbReference type="GO" id="GO:0006427">
    <property type="term" value="P:histidyl-tRNA aminoacylation"/>
    <property type="evidence" value="ECO:0007669"/>
    <property type="project" value="UniProtKB-UniRule"/>
</dbReference>
<dbReference type="CDD" id="cd00773">
    <property type="entry name" value="HisRS-like_core"/>
    <property type="match status" value="1"/>
</dbReference>
<dbReference type="CDD" id="cd00859">
    <property type="entry name" value="HisRS_anticodon"/>
    <property type="match status" value="1"/>
</dbReference>
<dbReference type="FunFam" id="3.30.930.10:FF:000005">
    <property type="entry name" value="Histidine--tRNA ligase"/>
    <property type="match status" value="1"/>
</dbReference>
<dbReference type="Gene3D" id="3.40.50.800">
    <property type="entry name" value="Anticodon-binding domain"/>
    <property type="match status" value="1"/>
</dbReference>
<dbReference type="Gene3D" id="3.30.930.10">
    <property type="entry name" value="Bira Bifunctional Protein, Domain 2"/>
    <property type="match status" value="1"/>
</dbReference>
<dbReference type="HAMAP" id="MF_00127">
    <property type="entry name" value="His_tRNA_synth"/>
    <property type="match status" value="1"/>
</dbReference>
<dbReference type="InterPro" id="IPR006195">
    <property type="entry name" value="aa-tRNA-synth_II"/>
</dbReference>
<dbReference type="InterPro" id="IPR045864">
    <property type="entry name" value="aa-tRNA-synth_II/BPL/LPL"/>
</dbReference>
<dbReference type="InterPro" id="IPR004154">
    <property type="entry name" value="Anticodon-bd"/>
</dbReference>
<dbReference type="InterPro" id="IPR036621">
    <property type="entry name" value="Anticodon-bd_dom_sf"/>
</dbReference>
<dbReference type="InterPro" id="IPR015807">
    <property type="entry name" value="His-tRNA-ligase"/>
</dbReference>
<dbReference type="InterPro" id="IPR041715">
    <property type="entry name" value="HisRS-like_core"/>
</dbReference>
<dbReference type="InterPro" id="IPR004516">
    <property type="entry name" value="HisRS/HisZ"/>
</dbReference>
<dbReference type="InterPro" id="IPR033656">
    <property type="entry name" value="HisRS_anticodon"/>
</dbReference>
<dbReference type="NCBIfam" id="TIGR00442">
    <property type="entry name" value="hisS"/>
    <property type="match status" value="1"/>
</dbReference>
<dbReference type="PANTHER" id="PTHR43707:SF1">
    <property type="entry name" value="HISTIDINE--TRNA LIGASE, MITOCHONDRIAL-RELATED"/>
    <property type="match status" value="1"/>
</dbReference>
<dbReference type="PANTHER" id="PTHR43707">
    <property type="entry name" value="HISTIDYL-TRNA SYNTHETASE"/>
    <property type="match status" value="1"/>
</dbReference>
<dbReference type="Pfam" id="PF03129">
    <property type="entry name" value="HGTP_anticodon"/>
    <property type="match status" value="1"/>
</dbReference>
<dbReference type="Pfam" id="PF13393">
    <property type="entry name" value="tRNA-synt_His"/>
    <property type="match status" value="1"/>
</dbReference>
<dbReference type="PIRSF" id="PIRSF001549">
    <property type="entry name" value="His-tRNA_synth"/>
    <property type="match status" value="1"/>
</dbReference>
<dbReference type="SUPFAM" id="SSF52954">
    <property type="entry name" value="Class II aaRS ABD-related"/>
    <property type="match status" value="1"/>
</dbReference>
<dbReference type="SUPFAM" id="SSF55681">
    <property type="entry name" value="Class II aaRS and biotin synthetases"/>
    <property type="match status" value="1"/>
</dbReference>
<dbReference type="PROSITE" id="PS50862">
    <property type="entry name" value="AA_TRNA_LIGASE_II"/>
    <property type="match status" value="1"/>
</dbReference>
<organism>
    <name type="scientific">Cupriavidus pinatubonensis (strain JMP 134 / LMG 1197)</name>
    <name type="common">Cupriavidus necator (strain JMP 134)</name>
    <dbReference type="NCBI Taxonomy" id="264198"/>
    <lineage>
        <taxon>Bacteria</taxon>
        <taxon>Pseudomonadati</taxon>
        <taxon>Pseudomonadota</taxon>
        <taxon>Betaproteobacteria</taxon>
        <taxon>Burkholderiales</taxon>
        <taxon>Burkholderiaceae</taxon>
        <taxon>Cupriavidus</taxon>
    </lineage>
</organism>
<gene>
    <name evidence="1" type="primary">hisS</name>
    <name type="ordered locus">Reut_A2085</name>
</gene>
<keyword id="KW-0030">Aminoacyl-tRNA synthetase</keyword>
<keyword id="KW-0067">ATP-binding</keyword>
<keyword id="KW-0963">Cytoplasm</keyword>
<keyword id="KW-0436">Ligase</keyword>
<keyword id="KW-0547">Nucleotide-binding</keyword>
<keyword id="KW-0648">Protein biosynthesis</keyword>
<accession>Q46ZI4</accession>
<sequence>MTQNENPSAQSGAKPEDKARPAKALQGVKGMNDMLPADAPLWEHFENAARAMLRAYGYQQIRTPIVEHTQLFVRGIGEVTDIVEKEMYSFTDALNGEQLTLRPEGTAAAVRATIEHNLLYDGPKRLWYTGPMFRHERPQRGRYRQFHQLGAEALGFAGPDVDAEIILMCQRLWDDLGLTGVRLEINSLGQAHERAAHREELIKYLEGFKDILDEDGKRRLYTNPLRVLDTKNPALQEMAANAPKLIDFLGEESLAHFEGVQRLLKANNIPYKINPRLVRGLDYYNLTVFEWITDKLGAQGTIAGGGRYDPLIAQMGGKAAPACGWAMGIERIIELIREEGVVPDAVGCDVYLVHQGEAAQQQATVAAERLRDAGLDVVLHATPDGKSGSFKSQMKRADASGAAYAVIIGEDEVAAGVVQVKELRQGAQAEGGGQQAQVPAENLVDYLIDAMVGASE</sequence>
<proteinExistence type="inferred from homology"/>
<protein>
    <recommendedName>
        <fullName evidence="1">Histidine--tRNA ligase</fullName>
        <ecNumber evidence="1">6.1.1.21</ecNumber>
    </recommendedName>
    <alternativeName>
        <fullName evidence="1">Histidyl-tRNA synthetase</fullName>
        <shortName evidence="1">HisRS</shortName>
    </alternativeName>
</protein>
<feature type="chain" id="PRO_0000136232" description="Histidine--tRNA ligase">
    <location>
        <begin position="1"/>
        <end position="456"/>
    </location>
</feature>
<feature type="region of interest" description="Disordered" evidence="2">
    <location>
        <begin position="1"/>
        <end position="22"/>
    </location>
</feature>
<feature type="compositionally biased region" description="Polar residues" evidence="2">
    <location>
        <begin position="1"/>
        <end position="11"/>
    </location>
</feature>
<comment type="catalytic activity">
    <reaction evidence="1">
        <text>tRNA(His) + L-histidine + ATP = L-histidyl-tRNA(His) + AMP + diphosphate + H(+)</text>
        <dbReference type="Rhea" id="RHEA:17313"/>
        <dbReference type="Rhea" id="RHEA-COMP:9665"/>
        <dbReference type="Rhea" id="RHEA-COMP:9689"/>
        <dbReference type="ChEBI" id="CHEBI:15378"/>
        <dbReference type="ChEBI" id="CHEBI:30616"/>
        <dbReference type="ChEBI" id="CHEBI:33019"/>
        <dbReference type="ChEBI" id="CHEBI:57595"/>
        <dbReference type="ChEBI" id="CHEBI:78442"/>
        <dbReference type="ChEBI" id="CHEBI:78527"/>
        <dbReference type="ChEBI" id="CHEBI:456215"/>
        <dbReference type="EC" id="6.1.1.21"/>
    </reaction>
</comment>
<comment type="subunit">
    <text evidence="1">Homodimer.</text>
</comment>
<comment type="subcellular location">
    <subcellularLocation>
        <location evidence="1">Cytoplasm</location>
    </subcellularLocation>
</comment>
<comment type="similarity">
    <text evidence="1">Belongs to the class-II aminoacyl-tRNA synthetase family.</text>
</comment>
<evidence type="ECO:0000255" key="1">
    <source>
        <dbReference type="HAMAP-Rule" id="MF_00127"/>
    </source>
</evidence>
<evidence type="ECO:0000256" key="2">
    <source>
        <dbReference type="SAM" id="MobiDB-lite"/>
    </source>
</evidence>